<name>PSAK1_SYNY3</name>
<gene>
    <name type="primary">psaK1</name>
    <name type="synonym">psaK</name>
    <name type="ordered locus">ssr0390</name>
</gene>
<comment type="subcellular location">
    <subcellularLocation>
        <location evidence="1">Cellular thylakoid membrane</location>
        <topology evidence="1">Multi-pass membrane protein</topology>
    </subcellularLocation>
</comment>
<comment type="similarity">
    <text evidence="3">Belongs to the PsaG/PsaK family.</text>
</comment>
<keyword id="KW-0002">3D-structure</keyword>
<keyword id="KW-0472">Membrane</keyword>
<keyword id="KW-0602">Photosynthesis</keyword>
<keyword id="KW-0603">Photosystem I</keyword>
<keyword id="KW-1185">Reference proteome</keyword>
<keyword id="KW-0793">Thylakoid</keyword>
<keyword id="KW-0812">Transmembrane</keyword>
<keyword id="KW-1133">Transmembrane helix</keyword>
<feature type="propeptide" id="PRO_0000029408" evidence="2">
    <location>
        <begin position="1"/>
        <end status="unknown"/>
    </location>
</feature>
<feature type="chain" id="PRO_0000029409" description="Photosystem I reaction center subunit PsaK 1">
    <location>
        <begin status="unknown"/>
        <end position="86"/>
    </location>
</feature>
<feature type="transmembrane region" description="Helical" evidence="2">
    <location>
        <begin position="14"/>
        <end position="34"/>
    </location>
</feature>
<feature type="transmembrane region" description="Helical" evidence="2">
    <location>
        <begin position="61"/>
        <end position="81"/>
    </location>
</feature>
<feature type="helix" evidence="5">
    <location>
        <begin position="18"/>
        <end position="36"/>
    </location>
</feature>
<feature type="strand" evidence="4">
    <location>
        <begin position="45"/>
        <end position="47"/>
    </location>
</feature>
<feature type="strand" evidence="5">
    <location>
        <begin position="53"/>
        <end position="56"/>
    </location>
</feature>
<feature type="helix" evidence="5">
    <location>
        <begin position="59"/>
        <end position="82"/>
    </location>
</feature>
<evidence type="ECO:0000250" key="1"/>
<evidence type="ECO:0000255" key="2"/>
<evidence type="ECO:0000305" key="3"/>
<evidence type="ECO:0007829" key="4">
    <source>
        <dbReference type="PDB" id="8AM5"/>
    </source>
</evidence>
<evidence type="ECO:0007829" key="5">
    <source>
        <dbReference type="PDB" id="8ASP"/>
    </source>
</evidence>
<reference key="1">
    <citation type="journal article" date="1996" name="DNA Res.">
        <title>Sequence analysis of the genome of the unicellular cyanobacterium Synechocystis sp. strain PCC6803. II. Sequence determination of the entire genome and assignment of potential protein-coding regions.</title>
        <authorList>
            <person name="Kaneko T."/>
            <person name="Sato S."/>
            <person name="Kotani H."/>
            <person name="Tanaka A."/>
            <person name="Asamizu E."/>
            <person name="Nakamura Y."/>
            <person name="Miyajima N."/>
            <person name="Hirosawa M."/>
            <person name="Sugiura M."/>
            <person name="Sasamoto S."/>
            <person name="Kimura T."/>
            <person name="Hosouchi T."/>
            <person name="Matsuno A."/>
            <person name="Muraki A."/>
            <person name="Nakazaki N."/>
            <person name="Naruo K."/>
            <person name="Okumura S."/>
            <person name="Shimpo S."/>
            <person name="Takeuchi C."/>
            <person name="Wada T."/>
            <person name="Watanabe A."/>
            <person name="Yamada M."/>
            <person name="Yasuda M."/>
            <person name="Tabata S."/>
        </authorList>
    </citation>
    <scope>NUCLEOTIDE SEQUENCE [LARGE SCALE GENOMIC DNA]</scope>
    <source>
        <strain>ATCC 27184 / PCC 6803 / Kazusa</strain>
    </source>
</reference>
<proteinExistence type="evidence at protein level"/>
<dbReference type="EMBL" id="BA000022">
    <property type="protein sequence ID" value="BAA16719.1"/>
    <property type="molecule type" value="Genomic_DNA"/>
</dbReference>
<dbReference type="PIR" id="S74567">
    <property type="entry name" value="S74567"/>
</dbReference>
<dbReference type="PDB" id="6NWA">
    <property type="method" value="EM"/>
    <property type="resolution" value="3.48 A"/>
    <property type="chains" value="K/T/k=1-86"/>
</dbReference>
<dbReference type="PDB" id="7UMH">
    <property type="method" value="EM"/>
    <property type="resolution" value="2.60 A"/>
    <property type="chains" value="K/T/k=1-86"/>
</dbReference>
<dbReference type="PDB" id="8AM5">
    <property type="method" value="EM"/>
    <property type="resolution" value="3.10 A"/>
    <property type="chains" value="k=1-86"/>
</dbReference>
<dbReference type="PDB" id="8ASL">
    <property type="method" value="EM"/>
    <property type="resolution" value="3.15 A"/>
    <property type="chains" value="k=1-86"/>
</dbReference>
<dbReference type="PDB" id="8ASP">
    <property type="method" value="EM"/>
    <property type="resolution" value="2.90 A"/>
    <property type="chains" value="k=1-86"/>
</dbReference>
<dbReference type="PDBsum" id="6NWA"/>
<dbReference type="PDBsum" id="7UMH"/>
<dbReference type="PDBsum" id="8AM5"/>
<dbReference type="PDBsum" id="8ASL"/>
<dbReference type="PDBsum" id="8ASP"/>
<dbReference type="EMDB" id="EMD-0524"/>
<dbReference type="EMDB" id="EMD-15522"/>
<dbReference type="EMDB" id="EMD-15618"/>
<dbReference type="EMDB" id="EMD-15621"/>
<dbReference type="EMDB" id="EMD-26601"/>
<dbReference type="SMR" id="P72712"/>
<dbReference type="IntAct" id="P72712">
    <property type="interactions" value="1"/>
</dbReference>
<dbReference type="STRING" id="1148.gene:10497574"/>
<dbReference type="PaxDb" id="1148-1651792"/>
<dbReference type="EnsemblBacteria" id="BAA16719">
    <property type="protein sequence ID" value="BAA16719"/>
    <property type="gene ID" value="BAA16719"/>
</dbReference>
<dbReference type="KEGG" id="syn:ssr0390"/>
<dbReference type="eggNOG" id="ENOG5032YIH">
    <property type="taxonomic scope" value="Bacteria"/>
</dbReference>
<dbReference type="InParanoid" id="P72712"/>
<dbReference type="BioCyc" id="MetaCyc:PSAK-MONOMER"/>
<dbReference type="Proteomes" id="UP000001425">
    <property type="component" value="Chromosome"/>
</dbReference>
<dbReference type="GO" id="GO:0009522">
    <property type="term" value="C:photosystem I"/>
    <property type="evidence" value="ECO:0007669"/>
    <property type="project" value="UniProtKB-KW"/>
</dbReference>
<dbReference type="GO" id="GO:0031676">
    <property type="term" value="C:plasma membrane-derived thylakoid membrane"/>
    <property type="evidence" value="ECO:0007669"/>
    <property type="project" value="UniProtKB-SubCell"/>
</dbReference>
<dbReference type="GO" id="GO:0015979">
    <property type="term" value="P:photosynthesis"/>
    <property type="evidence" value="ECO:0007669"/>
    <property type="project" value="UniProtKB-UniRule"/>
</dbReference>
<dbReference type="Gene3D" id="1.20.860.20">
    <property type="entry name" value="Photosystem I PsaK, reaction centre"/>
    <property type="match status" value="1"/>
</dbReference>
<dbReference type="HAMAP" id="MF_00474">
    <property type="entry name" value="PSI_PsaK"/>
    <property type="match status" value="1"/>
</dbReference>
<dbReference type="InterPro" id="IPR035982">
    <property type="entry name" value="PSI_centre_PsaK_sf"/>
</dbReference>
<dbReference type="InterPro" id="IPR000549">
    <property type="entry name" value="PSI_PsaG/PsaK"/>
</dbReference>
<dbReference type="InterPro" id="IPR017492">
    <property type="entry name" value="PSI_PsaK"/>
</dbReference>
<dbReference type="InterPro" id="IPR037101">
    <property type="entry name" value="PSI_PsaK_bact"/>
</dbReference>
<dbReference type="NCBIfam" id="TIGR03049">
    <property type="entry name" value="PS_I_psaK"/>
    <property type="match status" value="1"/>
</dbReference>
<dbReference type="Pfam" id="PF01241">
    <property type="entry name" value="PSI_PSAK"/>
    <property type="match status" value="1"/>
</dbReference>
<dbReference type="SUPFAM" id="SSF81563">
    <property type="entry name" value="Photosystem I reaction center subunit X, PsaK"/>
    <property type="match status" value="1"/>
</dbReference>
<dbReference type="PROSITE" id="PS01026">
    <property type="entry name" value="PHOTOSYSTEM_I_PSAGK"/>
    <property type="match status" value="1"/>
</dbReference>
<organism>
    <name type="scientific">Synechocystis sp. (strain ATCC 27184 / PCC 6803 / Kazusa)</name>
    <dbReference type="NCBI Taxonomy" id="1111708"/>
    <lineage>
        <taxon>Bacteria</taxon>
        <taxon>Bacillati</taxon>
        <taxon>Cyanobacteriota</taxon>
        <taxon>Cyanophyceae</taxon>
        <taxon>Synechococcales</taxon>
        <taxon>Merismopediaceae</taxon>
        <taxon>Synechocystis</taxon>
    </lineage>
</organism>
<sequence length="86" mass="8644">MHSFLLATAVPATLSWSPKVAGVMIACNILAIAFGKLTIKQQNVGTPMPSSNFFGGFGLGAVLGTASFGHILGAGVILGLANMGVL</sequence>
<accession>P72712</accession>
<protein>
    <recommendedName>
        <fullName>Photosystem I reaction center subunit PsaK 1</fullName>
    </recommendedName>
    <alternativeName>
        <fullName>Photosystem I subunit X 1</fullName>
    </alternativeName>
</protein>